<sequence>MKYVHVGVNVVSLEKSINFYEKVFGVKAVKVKTDYAKFLLETPGLNFTLNVADEVKGNQVNHFGFQVDSLEEVLKHKKRLEKEGFFAREEMDTTCCYAVQDKFWITDPDGNEWEFFYTKSNSEVQKQDSSSCCVTPPSDITTNSCC</sequence>
<reference key="1">
    <citation type="journal article" date="1995" name="Microbiology">
        <title>Complete nucleotide sequence of a skin element excised by DNA rearrangement during sporulation in Bacillus subtilis.</title>
        <authorList>
            <person name="Takemaru K."/>
            <person name="Mizuno M."/>
            <person name="Sato T."/>
            <person name="Takeuchi M."/>
            <person name="Kobayashi Y."/>
        </authorList>
    </citation>
    <scope>NUCLEOTIDE SEQUENCE [GENOMIC DNA]</scope>
    <source>
        <strain>168 / JH642</strain>
    </source>
</reference>
<reference key="2">
    <citation type="journal article" date="1996" name="Microbiology">
        <title>Systematic sequencing of the 283 kb 210 degrees-232 degrees region of the Bacillus subtilis genome containing the skin element and many sporulation genes.</title>
        <authorList>
            <person name="Mizuno M."/>
            <person name="Masuda S."/>
            <person name="Takemaru K."/>
            <person name="Hosono S."/>
            <person name="Sato T."/>
            <person name="Takeuchi M."/>
            <person name="Kobayashi Y."/>
        </authorList>
    </citation>
    <scope>NUCLEOTIDE SEQUENCE [GENOMIC DNA]</scope>
    <source>
        <strain>168 / JH642</strain>
    </source>
</reference>
<reference key="3">
    <citation type="journal article" date="1997" name="Nature">
        <title>The complete genome sequence of the Gram-positive bacterium Bacillus subtilis.</title>
        <authorList>
            <person name="Kunst F."/>
            <person name="Ogasawara N."/>
            <person name="Moszer I."/>
            <person name="Albertini A.M."/>
            <person name="Alloni G."/>
            <person name="Azevedo V."/>
            <person name="Bertero M.G."/>
            <person name="Bessieres P."/>
            <person name="Bolotin A."/>
            <person name="Borchert S."/>
            <person name="Borriss R."/>
            <person name="Boursier L."/>
            <person name="Brans A."/>
            <person name="Braun M."/>
            <person name="Brignell S.C."/>
            <person name="Bron S."/>
            <person name="Brouillet S."/>
            <person name="Bruschi C.V."/>
            <person name="Caldwell B."/>
            <person name="Capuano V."/>
            <person name="Carter N.M."/>
            <person name="Choi S.-K."/>
            <person name="Codani J.-J."/>
            <person name="Connerton I.F."/>
            <person name="Cummings N.J."/>
            <person name="Daniel R.A."/>
            <person name="Denizot F."/>
            <person name="Devine K.M."/>
            <person name="Duesterhoeft A."/>
            <person name="Ehrlich S.D."/>
            <person name="Emmerson P.T."/>
            <person name="Entian K.-D."/>
            <person name="Errington J."/>
            <person name="Fabret C."/>
            <person name="Ferrari E."/>
            <person name="Foulger D."/>
            <person name="Fritz C."/>
            <person name="Fujita M."/>
            <person name="Fujita Y."/>
            <person name="Fuma S."/>
            <person name="Galizzi A."/>
            <person name="Galleron N."/>
            <person name="Ghim S.-Y."/>
            <person name="Glaser P."/>
            <person name="Goffeau A."/>
            <person name="Golightly E.J."/>
            <person name="Grandi G."/>
            <person name="Guiseppi G."/>
            <person name="Guy B.J."/>
            <person name="Haga K."/>
            <person name="Haiech J."/>
            <person name="Harwood C.R."/>
            <person name="Henaut A."/>
            <person name="Hilbert H."/>
            <person name="Holsappel S."/>
            <person name="Hosono S."/>
            <person name="Hullo M.-F."/>
            <person name="Itaya M."/>
            <person name="Jones L.-M."/>
            <person name="Joris B."/>
            <person name="Karamata D."/>
            <person name="Kasahara Y."/>
            <person name="Klaerr-Blanchard M."/>
            <person name="Klein C."/>
            <person name="Kobayashi Y."/>
            <person name="Koetter P."/>
            <person name="Koningstein G."/>
            <person name="Krogh S."/>
            <person name="Kumano M."/>
            <person name="Kurita K."/>
            <person name="Lapidus A."/>
            <person name="Lardinois S."/>
            <person name="Lauber J."/>
            <person name="Lazarevic V."/>
            <person name="Lee S.-M."/>
            <person name="Levine A."/>
            <person name="Liu H."/>
            <person name="Masuda S."/>
            <person name="Mauel C."/>
            <person name="Medigue C."/>
            <person name="Medina N."/>
            <person name="Mellado R.P."/>
            <person name="Mizuno M."/>
            <person name="Moestl D."/>
            <person name="Nakai S."/>
            <person name="Noback M."/>
            <person name="Noone D."/>
            <person name="O'Reilly M."/>
            <person name="Ogawa K."/>
            <person name="Ogiwara A."/>
            <person name="Oudega B."/>
            <person name="Park S.-H."/>
            <person name="Parro V."/>
            <person name="Pohl T.M."/>
            <person name="Portetelle D."/>
            <person name="Porwollik S."/>
            <person name="Prescott A.M."/>
            <person name="Presecan E."/>
            <person name="Pujic P."/>
            <person name="Purnelle B."/>
            <person name="Rapoport G."/>
            <person name="Rey M."/>
            <person name="Reynolds S."/>
            <person name="Rieger M."/>
            <person name="Rivolta C."/>
            <person name="Rocha E."/>
            <person name="Roche B."/>
            <person name="Rose M."/>
            <person name="Sadaie Y."/>
            <person name="Sato T."/>
            <person name="Scanlan E."/>
            <person name="Schleich S."/>
            <person name="Schroeter R."/>
            <person name="Scoffone F."/>
            <person name="Sekiguchi J."/>
            <person name="Sekowska A."/>
            <person name="Seror S.J."/>
            <person name="Serror P."/>
            <person name="Shin B.-S."/>
            <person name="Soldo B."/>
            <person name="Sorokin A."/>
            <person name="Tacconi E."/>
            <person name="Takagi T."/>
            <person name="Takahashi H."/>
            <person name="Takemaru K."/>
            <person name="Takeuchi M."/>
            <person name="Tamakoshi A."/>
            <person name="Tanaka T."/>
            <person name="Terpstra P."/>
            <person name="Tognoni A."/>
            <person name="Tosato V."/>
            <person name="Uchiyama S."/>
            <person name="Vandenbol M."/>
            <person name="Vannier F."/>
            <person name="Vassarotti A."/>
            <person name="Viari A."/>
            <person name="Wambutt R."/>
            <person name="Wedler E."/>
            <person name="Wedler H."/>
            <person name="Weitzenegger T."/>
            <person name="Winters P."/>
            <person name="Wipat A."/>
            <person name="Yamamoto H."/>
            <person name="Yamane K."/>
            <person name="Yasumoto K."/>
            <person name="Yata K."/>
            <person name="Yoshida K."/>
            <person name="Yoshikawa H.-F."/>
            <person name="Zumstein E."/>
            <person name="Yoshikawa H."/>
            <person name="Danchin A."/>
        </authorList>
    </citation>
    <scope>NUCLEOTIDE SEQUENCE [LARGE SCALE GENOMIC DNA]</scope>
    <source>
        <strain>168</strain>
    </source>
</reference>
<reference key="4">
    <citation type="journal article" date="2009" name="Microbiology">
        <title>From a consortium sequence to a unified sequence: the Bacillus subtilis 168 reference genome a decade later.</title>
        <authorList>
            <person name="Barbe V."/>
            <person name="Cruveiller S."/>
            <person name="Kunst F."/>
            <person name="Lenoble P."/>
            <person name="Meurice G."/>
            <person name="Sekowska A."/>
            <person name="Vallenet D."/>
            <person name="Wang T."/>
            <person name="Moszer I."/>
            <person name="Medigue C."/>
            <person name="Danchin A."/>
        </authorList>
    </citation>
    <scope>SEQUENCE REVISION TO 116</scope>
</reference>
<reference key="5">
    <citation type="journal article" date="1995" name="Gene">
        <title>Analysis of a Bacillus subtilis genome fragment using a co-operative computer system prototype.</title>
        <authorList>
            <person name="Medigue C."/>
            <person name="Moszer I."/>
            <person name="Viari A."/>
            <person name="Danchin A."/>
        </authorList>
    </citation>
    <scope>IDENTIFICATION</scope>
</reference>
<dbReference type="EC" id="1.13.11.-" evidence="1"/>
<dbReference type="EMBL" id="D32216">
    <property type="protein sequence ID" value="BAA06968.1"/>
    <property type="molecule type" value="Genomic_DNA"/>
</dbReference>
<dbReference type="EMBL" id="D84432">
    <property type="protein sequence ID" value="BAA12432.1"/>
    <property type="molecule type" value="Genomic_DNA"/>
</dbReference>
<dbReference type="EMBL" id="AL009126">
    <property type="protein sequence ID" value="CAB14521.2"/>
    <property type="molecule type" value="Genomic_DNA"/>
</dbReference>
<dbReference type="PIR" id="A69950">
    <property type="entry name" value="A69950"/>
</dbReference>
<dbReference type="RefSeq" id="NP_390457.2">
    <property type="nucleotide sequence ID" value="NC_000964.3"/>
</dbReference>
<dbReference type="RefSeq" id="WP_003229954.1">
    <property type="nucleotide sequence ID" value="NZ_OZ025638.1"/>
</dbReference>
<dbReference type="SMR" id="P45945"/>
<dbReference type="FunCoup" id="P45945">
    <property type="interactions" value="5"/>
</dbReference>
<dbReference type="STRING" id="224308.BSU25800"/>
<dbReference type="PaxDb" id="224308-BSU25800"/>
<dbReference type="EnsemblBacteria" id="CAB14521">
    <property type="protein sequence ID" value="CAB14521"/>
    <property type="gene ID" value="BSU_25800"/>
</dbReference>
<dbReference type="GeneID" id="937794"/>
<dbReference type="KEGG" id="bsu:BSU25800"/>
<dbReference type="PATRIC" id="fig|224308.179.peg.2804"/>
<dbReference type="eggNOG" id="COG0346">
    <property type="taxonomic scope" value="Bacteria"/>
</dbReference>
<dbReference type="InParanoid" id="P45945"/>
<dbReference type="OrthoDB" id="9789608at2"/>
<dbReference type="PhylomeDB" id="P45945"/>
<dbReference type="BioCyc" id="BSUB:BSU25800-MONOMER"/>
<dbReference type="Proteomes" id="UP000001570">
    <property type="component" value="Chromosome"/>
</dbReference>
<dbReference type="GO" id="GO:0046686">
    <property type="term" value="P:response to cadmium ion"/>
    <property type="evidence" value="ECO:0000318"/>
    <property type="project" value="GO_Central"/>
</dbReference>
<dbReference type="CDD" id="cd07254">
    <property type="entry name" value="VOC_like"/>
    <property type="match status" value="1"/>
</dbReference>
<dbReference type="Gene3D" id="3.10.180.10">
    <property type="entry name" value="2,3-Dihydroxybiphenyl 1,2-Dioxygenase, domain 1"/>
    <property type="match status" value="1"/>
</dbReference>
<dbReference type="InterPro" id="IPR052393">
    <property type="entry name" value="Cadmium-induced_rsp"/>
</dbReference>
<dbReference type="InterPro" id="IPR029068">
    <property type="entry name" value="Glyas_Bleomycin-R_OHBP_Dase"/>
</dbReference>
<dbReference type="InterPro" id="IPR004360">
    <property type="entry name" value="Glyas_Fos-R_dOase_dom"/>
</dbReference>
<dbReference type="InterPro" id="IPR037523">
    <property type="entry name" value="VOC"/>
</dbReference>
<dbReference type="InterPro" id="IPR049789">
    <property type="entry name" value="YqcK/CadI-like"/>
</dbReference>
<dbReference type="NCBIfam" id="NF041414">
    <property type="entry name" value="ArsI_CadI_VOC"/>
    <property type="match status" value="1"/>
</dbReference>
<dbReference type="PANTHER" id="PTHR41294">
    <property type="entry name" value="CADMIUM-INDUCED PROTEIN CADI"/>
    <property type="match status" value="1"/>
</dbReference>
<dbReference type="PANTHER" id="PTHR41294:SF1">
    <property type="entry name" value="CADMIUM-INDUCED PROTEIN CADI"/>
    <property type="match status" value="1"/>
</dbReference>
<dbReference type="Pfam" id="PF00903">
    <property type="entry name" value="Glyoxalase"/>
    <property type="match status" value="1"/>
</dbReference>
<dbReference type="SUPFAM" id="SSF54593">
    <property type="entry name" value="Glyoxalase/Bleomycin resistance protein/Dihydroxybiphenyl dioxygenase"/>
    <property type="match status" value="1"/>
</dbReference>
<dbReference type="PROSITE" id="PS51819">
    <property type="entry name" value="VOC"/>
    <property type="match status" value="1"/>
</dbReference>
<organism>
    <name type="scientific">Bacillus subtilis (strain 168)</name>
    <dbReference type="NCBI Taxonomy" id="224308"/>
    <lineage>
        <taxon>Bacteria</taxon>
        <taxon>Bacillati</taxon>
        <taxon>Bacillota</taxon>
        <taxon>Bacilli</taxon>
        <taxon>Bacillales</taxon>
        <taxon>Bacillaceae</taxon>
        <taxon>Bacillus</taxon>
    </lineage>
</organism>
<gene>
    <name type="primary">yqcK</name>
    <name type="ordered locus">BSU25800</name>
</gene>
<name>ARSI_BACSU</name>
<feature type="chain" id="PRO_0000049779" description="Probable trivalent organoarsenical cleaving enzyme">
    <location>
        <begin position="1"/>
        <end position="146"/>
    </location>
</feature>
<feature type="domain" description="VOC" evidence="3">
    <location>
        <begin position="2"/>
        <end position="118"/>
    </location>
</feature>
<feature type="binding site" evidence="2">
    <location>
        <position position="5"/>
    </location>
    <ligand>
        <name>Fe(2+)</name>
        <dbReference type="ChEBI" id="CHEBI:29033"/>
    </ligand>
</feature>
<feature type="binding site" evidence="2">
    <location>
        <position position="62"/>
    </location>
    <ligand>
        <name>Fe(2+)</name>
        <dbReference type="ChEBI" id="CHEBI:29033"/>
    </ligand>
</feature>
<feature type="binding site" evidence="2">
    <location>
        <position position="95"/>
    </location>
    <ligand>
        <name>roxarsone (III)</name>
        <dbReference type="ChEBI" id="CHEBI:231974"/>
    </ligand>
</feature>
<feature type="binding site" evidence="2">
    <location>
        <position position="96"/>
    </location>
    <ligand>
        <name>roxarsone (III)</name>
        <dbReference type="ChEBI" id="CHEBI:231974"/>
    </ligand>
</feature>
<feature type="binding site" evidence="2">
    <location>
        <position position="114"/>
    </location>
    <ligand>
        <name>Fe(2+)</name>
        <dbReference type="ChEBI" id="CHEBI:29033"/>
    </ligand>
</feature>
<feature type="sequence conflict" description="In Ref. 1; BAA06968 and 2; BAA12432." evidence="4" ref="1 2">
    <original>F</original>
    <variation>S</variation>
    <location>
        <position position="116"/>
    </location>
</feature>
<proteinExistence type="inferred from homology"/>
<comment type="function">
    <text evidence="1">Nonheme iron-dependent dioxygenase that can break carbon-arsenic bonds, playing a role in the detoxification of environmental organoarsenical compounds. Catalyzes the oxygen-dependent demethylation of highly toxic methylarsonous acid (MAs(III)) to arsenite, which can then be exported out of the cell. Can also cleave the C-As bond in several trivalent aromatic arsenicals, including roxarsone (III), nitarsone (III) and (4-aminophenyl)arsonous acid. Organoarsenical degradation by this enzyme is proposed to have a significant impact on the arsenic biogeocycle that maintains a balance between organic and inorganic species.</text>
</comment>
<comment type="catalytic activity">
    <reaction evidence="1">
        <text>methylarsonous acid + AH2 + O2 = arsenite + methanol + A + H(+)</text>
        <dbReference type="Rhea" id="RHEA:82323"/>
        <dbReference type="ChEBI" id="CHEBI:13193"/>
        <dbReference type="ChEBI" id="CHEBI:15378"/>
        <dbReference type="ChEBI" id="CHEBI:15379"/>
        <dbReference type="ChEBI" id="CHEBI:17499"/>
        <dbReference type="ChEBI" id="CHEBI:17790"/>
        <dbReference type="ChEBI" id="CHEBI:17826"/>
        <dbReference type="ChEBI" id="CHEBI:29242"/>
    </reaction>
    <physiologicalReaction direction="left-to-right" evidence="1">
        <dbReference type="Rhea" id="RHEA:82324"/>
    </physiologicalReaction>
</comment>
<comment type="catalytic activity">
    <reaction evidence="1">
        <text>roxarsone (III) + AH2 + O2 = 4-hydroxy-3-nitrocyclohexa-2,5-dien-1-one + arsenite + A + H(+)</text>
        <dbReference type="Rhea" id="RHEA:82363"/>
        <dbReference type="ChEBI" id="CHEBI:13193"/>
        <dbReference type="ChEBI" id="CHEBI:15378"/>
        <dbReference type="ChEBI" id="CHEBI:15379"/>
        <dbReference type="ChEBI" id="CHEBI:17499"/>
        <dbReference type="ChEBI" id="CHEBI:29242"/>
        <dbReference type="ChEBI" id="CHEBI:231974"/>
        <dbReference type="ChEBI" id="CHEBI:231975"/>
    </reaction>
    <physiologicalReaction direction="left-to-right" evidence="1">
        <dbReference type="Rhea" id="RHEA:82364"/>
    </physiologicalReaction>
</comment>
<comment type="catalytic activity">
    <reaction evidence="1">
        <text>nitarsone (III) + AH2 + O2 = 4-nitrocyclohexa-2,5-dien-1-one + arsenite + A + H(+)</text>
        <dbReference type="Rhea" id="RHEA:82439"/>
        <dbReference type="ChEBI" id="CHEBI:13193"/>
        <dbReference type="ChEBI" id="CHEBI:15378"/>
        <dbReference type="ChEBI" id="CHEBI:15379"/>
        <dbReference type="ChEBI" id="CHEBI:17499"/>
        <dbReference type="ChEBI" id="CHEBI:29242"/>
        <dbReference type="ChEBI" id="CHEBI:232329"/>
        <dbReference type="ChEBI" id="CHEBI:232330"/>
    </reaction>
    <physiologicalReaction direction="left-to-right" evidence="1">
        <dbReference type="Rhea" id="RHEA:82440"/>
    </physiologicalReaction>
</comment>
<comment type="catalytic activity">
    <reaction evidence="1">
        <text>4-aminophenylarsonous acid + AH2 + O2 = 4-aminocyclohexa-2,5-dien-1-one + arsenite + A</text>
        <dbReference type="Rhea" id="RHEA:82443"/>
        <dbReference type="ChEBI" id="CHEBI:13193"/>
        <dbReference type="ChEBI" id="CHEBI:15379"/>
        <dbReference type="ChEBI" id="CHEBI:17499"/>
        <dbReference type="ChEBI" id="CHEBI:29242"/>
        <dbReference type="ChEBI" id="CHEBI:50022"/>
        <dbReference type="ChEBI" id="CHEBI:232331"/>
    </reaction>
    <physiologicalReaction direction="left-to-right" evidence="1">
        <dbReference type="Rhea" id="RHEA:82444"/>
    </physiologicalReaction>
</comment>
<comment type="cofactor">
    <cofactor evidence="1">
        <name>Fe(2+)</name>
        <dbReference type="ChEBI" id="CHEBI:29033"/>
    </cofactor>
</comment>
<comment type="domain">
    <text evidence="1">The thiolates of the vicinal cysteine pair (Cys95-Cys96) directly coordinate the arsenic atom of the organoarsenical substrate.</text>
</comment>
<comment type="miscellaneous">
    <text evidence="1">Organoarsenicals are used as herbicides, pesticides, antimicrobial growth promoters, and chemical warfare agents. Arsenic is the most widespread environmental toxin and is classified as a Group 1 human carcinogen.</text>
</comment>
<comment type="similarity">
    <text evidence="4">To M.tuberculosis Rv2641.</text>
</comment>
<evidence type="ECO:0000250" key="1">
    <source>
        <dbReference type="UniProtKB" id="A0A059WI14"/>
    </source>
</evidence>
<evidence type="ECO:0000250" key="2">
    <source>
        <dbReference type="UniProtKB" id="D1A230"/>
    </source>
</evidence>
<evidence type="ECO:0000255" key="3">
    <source>
        <dbReference type="PROSITE-ProRule" id="PRU01163"/>
    </source>
</evidence>
<evidence type="ECO:0000305" key="4"/>
<accession>P45945</accession>
<protein>
    <recommendedName>
        <fullName evidence="4">Probable trivalent organoarsenical cleaving enzyme</fullName>
        <ecNumber evidence="1">1.13.11.-</ecNumber>
    </recommendedName>
    <alternativeName>
        <fullName evidence="1">C-As lyase</fullName>
    </alternativeName>
    <alternativeName>
        <fullName evidence="1">Methylarsonous acid demethylase</fullName>
        <shortName evidence="1">MAs(III) demethylase</shortName>
    </alternativeName>
</protein>
<keyword id="KW-0216">Detoxification</keyword>
<keyword id="KW-0223">Dioxygenase</keyword>
<keyword id="KW-0408">Iron</keyword>
<keyword id="KW-0479">Metal-binding</keyword>
<keyword id="KW-0560">Oxidoreductase</keyword>
<keyword id="KW-1185">Reference proteome</keyword>